<proteinExistence type="inferred from homology"/>
<comment type="function">
    <text evidence="1">Part of the Tol-Pal system, which plays a role in outer membrane invagination during cell division and is important for maintaining outer membrane integrity.</text>
</comment>
<comment type="subunit">
    <text evidence="1">The Tol-Pal system is composed of five core proteins: the inner membrane proteins TolA, TolQ and TolR, the periplasmic protein TolB and the outer membrane protein Pal. They form a network linking the inner and outer membranes and the peptidoglycan layer.</text>
</comment>
<comment type="subcellular location">
    <subcellularLocation>
        <location evidence="1">Periplasm</location>
    </subcellularLocation>
</comment>
<comment type="similarity">
    <text evidence="1">Belongs to the TolB family.</text>
</comment>
<protein>
    <recommendedName>
        <fullName evidence="1">Tol-Pal system protein TolB</fullName>
    </recommendedName>
</protein>
<name>TOLB_NITWN</name>
<reference key="1">
    <citation type="journal article" date="2006" name="Appl. Environ. Microbiol.">
        <title>Genome sequence of the chemolithoautotrophic nitrite-oxidizing bacterium Nitrobacter winogradskyi Nb-255.</title>
        <authorList>
            <person name="Starkenburg S.R."/>
            <person name="Chain P.S.G."/>
            <person name="Sayavedra-Soto L.A."/>
            <person name="Hauser L."/>
            <person name="Land M.L."/>
            <person name="Larimer F.W."/>
            <person name="Malfatti S.A."/>
            <person name="Klotz M.G."/>
            <person name="Bottomley P.J."/>
            <person name="Arp D.J."/>
            <person name="Hickey W.J."/>
        </authorList>
    </citation>
    <scope>NUCLEOTIDE SEQUENCE [LARGE SCALE GENOMIC DNA]</scope>
    <source>
        <strain>ATCC 25391 / DSM 10237 / CIP 104748 / NCIMB 11846 / Nb-255</strain>
    </source>
</reference>
<sequence>MIERNGLQRMPFRLNRRHMISGMASAAVLLGSRQALGQARVQITEGNVAPLPIAIPNFVGGTPSDNEVGAGVAKVITNNLKRSGLFAPIDQAAYIEKITNIDVPPQFANWKTINAQALVTGRMTRQGDGRLKAEFRLWDVATGQQLAGQQYFTSPEYWRRIAHIISDQIYERLTGEKGYFDSRVVFVDESGSSQRRVKRLALMDQDGANVRYLTRGADLVITPRFSPSTQEVTYMEFGQGDPRVYLFNIETGQREIVGNFPGMSFSPRFAPDGQRIIMSLQQGGNSNLFVMDLRSKSTTRLTDTPAIDTSPSYSPDGARICFESDRGGKPQIYVMGATGGGAQRISFGEGSYSTPVWSPRGDYIAFTKQGGGQFSIGIIKPDGSGERILTSGFHNEGPTFAPNGRVLMFFRDPGGGGGPSLYTIDVSGRNELKVPTPGFASDPAWSPLLS</sequence>
<keyword id="KW-0131">Cell cycle</keyword>
<keyword id="KW-0132">Cell division</keyword>
<keyword id="KW-0574">Periplasm</keyword>
<keyword id="KW-1185">Reference proteome</keyword>
<keyword id="KW-0732">Signal</keyword>
<organism>
    <name type="scientific">Nitrobacter winogradskyi (strain ATCC 25391 / DSM 10237 / CIP 104748 / NCIMB 11846 / Nb-255)</name>
    <dbReference type="NCBI Taxonomy" id="323098"/>
    <lineage>
        <taxon>Bacteria</taxon>
        <taxon>Pseudomonadati</taxon>
        <taxon>Pseudomonadota</taxon>
        <taxon>Alphaproteobacteria</taxon>
        <taxon>Hyphomicrobiales</taxon>
        <taxon>Nitrobacteraceae</taxon>
        <taxon>Nitrobacter</taxon>
    </lineage>
</organism>
<feature type="signal peptide" evidence="1">
    <location>
        <begin position="1"/>
        <end position="37"/>
    </location>
</feature>
<feature type="chain" id="PRO_0000259060" description="Tol-Pal system protein TolB" evidence="1">
    <location>
        <begin position="38"/>
        <end position="450"/>
    </location>
</feature>
<evidence type="ECO:0000255" key="1">
    <source>
        <dbReference type="HAMAP-Rule" id="MF_00671"/>
    </source>
</evidence>
<gene>
    <name evidence="1" type="primary">tolB</name>
    <name type="ordered locus">Nwi_2717</name>
</gene>
<dbReference type="EMBL" id="CP000115">
    <property type="protein sequence ID" value="ABA05970.1"/>
    <property type="molecule type" value="Genomic_DNA"/>
</dbReference>
<dbReference type="SMR" id="Q3SP21"/>
<dbReference type="STRING" id="323098.Nwi_2717"/>
<dbReference type="KEGG" id="nwi:Nwi_2717"/>
<dbReference type="eggNOG" id="COG0823">
    <property type="taxonomic scope" value="Bacteria"/>
</dbReference>
<dbReference type="HOGENOM" id="CLU_047123_0_0_5"/>
<dbReference type="Proteomes" id="UP000002531">
    <property type="component" value="Chromosome"/>
</dbReference>
<dbReference type="GO" id="GO:0042597">
    <property type="term" value="C:periplasmic space"/>
    <property type="evidence" value="ECO:0007669"/>
    <property type="project" value="UniProtKB-SubCell"/>
</dbReference>
<dbReference type="GO" id="GO:0051301">
    <property type="term" value="P:cell division"/>
    <property type="evidence" value="ECO:0007669"/>
    <property type="project" value="UniProtKB-UniRule"/>
</dbReference>
<dbReference type="GO" id="GO:0017038">
    <property type="term" value="P:protein import"/>
    <property type="evidence" value="ECO:0007669"/>
    <property type="project" value="InterPro"/>
</dbReference>
<dbReference type="Gene3D" id="2.120.10.30">
    <property type="entry name" value="TolB, C-terminal domain"/>
    <property type="match status" value="1"/>
</dbReference>
<dbReference type="Gene3D" id="3.40.50.10070">
    <property type="entry name" value="TolB, N-terminal domain"/>
    <property type="match status" value="1"/>
</dbReference>
<dbReference type="HAMAP" id="MF_00671">
    <property type="entry name" value="TolB"/>
    <property type="match status" value="1"/>
</dbReference>
<dbReference type="InterPro" id="IPR011042">
    <property type="entry name" value="6-blade_b-propeller_TolB-like"/>
</dbReference>
<dbReference type="InterPro" id="IPR011659">
    <property type="entry name" value="PD40"/>
</dbReference>
<dbReference type="InterPro" id="IPR014167">
    <property type="entry name" value="Tol-Pal_TolB"/>
</dbReference>
<dbReference type="InterPro" id="IPR007195">
    <property type="entry name" value="TolB_N"/>
</dbReference>
<dbReference type="NCBIfam" id="TIGR02800">
    <property type="entry name" value="propeller_TolB"/>
    <property type="match status" value="1"/>
</dbReference>
<dbReference type="PANTHER" id="PTHR36842:SF1">
    <property type="entry name" value="PROTEIN TOLB"/>
    <property type="match status" value="1"/>
</dbReference>
<dbReference type="PANTHER" id="PTHR36842">
    <property type="entry name" value="PROTEIN TOLB HOMOLOG"/>
    <property type="match status" value="1"/>
</dbReference>
<dbReference type="Pfam" id="PF07676">
    <property type="entry name" value="PD40"/>
    <property type="match status" value="3"/>
</dbReference>
<dbReference type="Pfam" id="PF04052">
    <property type="entry name" value="TolB_N"/>
    <property type="match status" value="1"/>
</dbReference>
<dbReference type="SUPFAM" id="SSF52964">
    <property type="entry name" value="TolB, N-terminal domain"/>
    <property type="match status" value="1"/>
</dbReference>
<dbReference type="SUPFAM" id="SSF69304">
    <property type="entry name" value="Tricorn protease N-terminal domain"/>
    <property type="match status" value="1"/>
</dbReference>
<accession>Q3SP21</accession>